<comment type="function">
    <text evidence="1">Anti-sigma factor for SigI4. Negatively regulates SigI4 activity through direct interaction. Binding of the polysaccharide substrate to the extracellular C-terminal sensing domain of RsgI4 may induce a conformational change in its N-terminal cytoplasmic region, leading to the release and activation of SigI4.</text>
</comment>
<comment type="subunit">
    <text evidence="4">Interacts (via RsgI N-terminal anti-sigma domain) with SigI4.</text>
</comment>
<comment type="subcellular location">
    <subcellularLocation>
        <location evidence="9">Cell membrane</location>
        <topology evidence="2">Single-pass membrane protein</topology>
    </subcellularLocation>
</comment>
<comment type="induction">
    <text evidence="7">Up-regulated in pretreated yellow poplar (PYP)-grown cells.</text>
</comment>
<comment type="domain">
    <text evidence="6">The CBM3 domain binds to cellulose.</text>
</comment>
<reference key="1">
    <citation type="submission" date="2007-02" db="EMBL/GenBank/DDBJ databases">
        <title>Complete sequence of Clostridium thermocellum ATCC 27405.</title>
        <authorList>
            <consortium name="US DOE Joint Genome Institute"/>
            <person name="Copeland A."/>
            <person name="Lucas S."/>
            <person name="Lapidus A."/>
            <person name="Barry K."/>
            <person name="Detter J.C."/>
            <person name="Glavina del Rio T."/>
            <person name="Hammon N."/>
            <person name="Israni S."/>
            <person name="Dalin E."/>
            <person name="Tice H."/>
            <person name="Pitluck S."/>
            <person name="Chertkov O."/>
            <person name="Brettin T."/>
            <person name="Bruce D."/>
            <person name="Han C."/>
            <person name="Tapia R."/>
            <person name="Gilna P."/>
            <person name="Schmutz J."/>
            <person name="Larimer F."/>
            <person name="Land M."/>
            <person name="Hauser L."/>
            <person name="Kyrpides N."/>
            <person name="Mikhailova N."/>
            <person name="Wu J.H.D."/>
            <person name="Newcomb M."/>
            <person name="Richardson P."/>
        </authorList>
    </citation>
    <scope>NUCLEOTIDE SEQUENCE [LARGE SCALE GENOMIC DNA]</scope>
    <source>
        <strain>ATCC 27405 / DSM 1237 / JCM 9322 / NBRC 103400 / NCIMB 10682 / NRRL B-4536 / VPI 7372</strain>
    </source>
</reference>
<reference key="2">
    <citation type="journal article" date="2010" name="FEMS Microbiol. Lett.">
        <title>The unique set of putative membrane-associated anti-sigma factors in Clostridium thermocellum suggests a novel extracellular carbohydrate-sensing mechanism involved in gene regulation.</title>
        <authorList>
            <person name="Kahel-Raifer H."/>
            <person name="Jindou S."/>
            <person name="Bahari L."/>
            <person name="Nataf Y."/>
            <person name="Shoham Y."/>
            <person name="Bayer E.A."/>
            <person name="Borovok I."/>
            <person name="Lamed R."/>
        </authorList>
    </citation>
    <scope>NOMENCLATURE</scope>
    <scope>DOMAIN</scope>
    <source>
        <strain>ATCC 27405 / DSM 1237 / JCM 9322 / NBRC 103400 / NCIMB 10682 / NRRL B-4536 / VPI 7372</strain>
    </source>
</reference>
<reference key="3">
    <citation type="journal article" date="2014" name="Front. Microbiol.">
        <title>Comparison of transcriptional profiles of Clostridium thermocellum grown on cellobiose and pretreated yellow poplar using RNA-Seq.</title>
        <authorList>
            <person name="Wei H."/>
            <person name="Fu Y."/>
            <person name="Magnusson L."/>
            <person name="Baker J.O."/>
            <person name="Maness P.C."/>
            <person name="Xu Q."/>
            <person name="Yang S."/>
            <person name="Bowersox A."/>
            <person name="Bogorad I."/>
            <person name="Wang W."/>
            <person name="Tucker M.P."/>
            <person name="Himmel M.E."/>
            <person name="Ding S.Y."/>
        </authorList>
    </citation>
    <scope>INDUCTION</scope>
    <source>
        <strain>ATCC 27405 / DSM 1237 / JCM 9322 / NBRC 103400 / NCIMB 10682 / NRRL B-4536 / VPI 7372</strain>
    </source>
</reference>
<reference evidence="11" key="4">
    <citation type="journal article" date="2014" name="Acta Crystallogr. D">
        <title>Fine-structural variance of family 3 carbohydrate-binding modules as extracellular biomass-sensing components of Clostridium thermocellum anti-sigmaI factors.</title>
        <authorList>
            <person name="Yaniv O."/>
            <person name="Fichman G."/>
            <person name="Borovok I."/>
            <person name="Shoham Y."/>
            <person name="Bayer E.A."/>
            <person name="Lamed R."/>
            <person name="Shimon L.J."/>
            <person name="Frolow F."/>
        </authorList>
    </citation>
    <scope>X-RAY CRYSTALLOGRAPHY (1.28 ANGSTROMS) OF 374-522</scope>
    <source>
        <strain>ATCC 27405 / DSM 1237 / JCM 9322 / NBRC 103400 / NCIMB 10682 / NRRL B-4536 / VPI 7372</strain>
    </source>
</reference>
<protein>
    <recommendedName>
        <fullName evidence="9">Anti-sigma-I factor RsgI4</fullName>
    </recommendedName>
</protein>
<feature type="chain" id="PRO_0000436547" description="Anti-sigma-I factor RsgI4">
    <location>
        <begin position="1"/>
        <end position="522"/>
    </location>
</feature>
<feature type="topological domain" description="Cytoplasmic" evidence="9">
    <location>
        <begin position="1"/>
        <end position="51"/>
    </location>
</feature>
<feature type="transmembrane region" description="Helical" evidence="2">
    <location>
        <begin position="52"/>
        <end position="72"/>
    </location>
</feature>
<feature type="topological domain" description="Extracellular" evidence="9">
    <location>
        <begin position="73"/>
        <end position="522"/>
    </location>
</feature>
<feature type="domain" description="RsgI N-terminal anti-sigma" evidence="4">
    <location>
        <begin position="2"/>
        <end position="49"/>
    </location>
</feature>
<feature type="domain" description="CBM3" evidence="3">
    <location>
        <begin position="371"/>
        <end position="522"/>
    </location>
</feature>
<feature type="region of interest" description="Disordered" evidence="5">
    <location>
        <begin position="311"/>
        <end position="371"/>
    </location>
</feature>
<feature type="compositionally biased region" description="Low complexity" evidence="5">
    <location>
        <begin position="311"/>
        <end position="361"/>
    </location>
</feature>
<gene>
    <name evidence="8" type="primary">rsgI4</name>
    <name evidence="10" type="ordered locus">Cthe_0404</name>
</gene>
<sequence>MNLGVVIKIKRKKAIIVTETGEFKAVNARNGMFLGQKILFDQQDVIENNRNGIGLAYSAAIAGMVAVFVFMFTYFGLHNFNGTFAYVDVDINPSVEFAVNRDGIVVNAEPLNDDGRKVLEELIYKDALLEDVILDLVDKSRKYGFIEDNDRKNIILISAALNSDEQEQRNDFEKKLVDNLMPELENLDVNIEMRFVIASKEQRKKAQENKVSMGKYMIYEMARRQGEKLTLESIMSETLENLLLGQDFGVIETEKTPVNTPVKSTATPTKALAAEITPTKTPEQVVMTPANTPAKPTAAPTKAPAAVAVTSAKTPERATTVPVNTPVKPTDAPTKSPATATATATRAPVKATATPAKTLKPSDTPVKTPDGEQSVKVRFYNNNTLSETGVIYMRINVINTGNAPLDLSDLKLRYYYTIDSESEQRFNCDWSSIGAHNVTGSFGKVNPSRNGADTYVEIGFTKEAGMLQPGESVELNARFSKTDNTQYNKADDYSFNSHYYEYVDWDRITAYISGILKWGREP</sequence>
<accession>A3DCG3</accession>
<keyword id="KW-0002">3D-structure</keyword>
<keyword id="KW-1003">Cell membrane</keyword>
<keyword id="KW-0472">Membrane</keyword>
<keyword id="KW-1185">Reference proteome</keyword>
<keyword id="KW-0812">Transmembrane</keyword>
<keyword id="KW-1133">Transmembrane helix</keyword>
<name>RSGI4_ACET2</name>
<proteinExistence type="evidence at protein level"/>
<dbReference type="EMBL" id="CP000568">
    <property type="protein sequence ID" value="ABN51642.1"/>
    <property type="molecule type" value="Genomic_DNA"/>
</dbReference>
<dbReference type="RefSeq" id="WP_003512704.1">
    <property type="nucleotide sequence ID" value="NC_009012.1"/>
</dbReference>
<dbReference type="PDB" id="4B97">
    <property type="method" value="X-ray"/>
    <property type="resolution" value="1.28 A"/>
    <property type="chains" value="A=374-522"/>
</dbReference>
<dbReference type="PDBsum" id="4B97"/>
<dbReference type="SMR" id="A3DCG3"/>
<dbReference type="STRING" id="203119.Cthe_0404"/>
<dbReference type="CAZy" id="CBM3">
    <property type="family name" value="Carbohydrate-Binding Module Family 3"/>
</dbReference>
<dbReference type="GeneID" id="35804499"/>
<dbReference type="KEGG" id="cth:Cthe_0404"/>
<dbReference type="eggNOG" id="COG4447">
    <property type="taxonomic scope" value="Bacteria"/>
</dbReference>
<dbReference type="HOGENOM" id="CLU_511640_0_0_9"/>
<dbReference type="OrthoDB" id="9800626at2"/>
<dbReference type="Proteomes" id="UP000002145">
    <property type="component" value="Chromosome"/>
</dbReference>
<dbReference type="GO" id="GO:0005886">
    <property type="term" value="C:plasma membrane"/>
    <property type="evidence" value="ECO:0007669"/>
    <property type="project" value="UniProtKB-SubCell"/>
</dbReference>
<dbReference type="GO" id="GO:0030248">
    <property type="term" value="F:cellulose binding"/>
    <property type="evidence" value="ECO:0007669"/>
    <property type="project" value="InterPro"/>
</dbReference>
<dbReference type="GO" id="GO:0005975">
    <property type="term" value="P:carbohydrate metabolic process"/>
    <property type="evidence" value="ECO:0007669"/>
    <property type="project" value="InterPro"/>
</dbReference>
<dbReference type="Gene3D" id="2.60.40.710">
    <property type="entry name" value="Endoglucanase-like"/>
    <property type="match status" value="1"/>
</dbReference>
<dbReference type="InterPro" id="IPR024449">
    <property type="entry name" value="Anti-sigma_RsgI_N"/>
</dbReference>
<dbReference type="InterPro" id="IPR008965">
    <property type="entry name" value="CBM2/CBM3_carb-bd_dom_sf"/>
</dbReference>
<dbReference type="InterPro" id="IPR001956">
    <property type="entry name" value="CBM3"/>
</dbReference>
<dbReference type="InterPro" id="IPR036966">
    <property type="entry name" value="CBM3_sf"/>
</dbReference>
<dbReference type="InterPro" id="IPR055431">
    <property type="entry name" value="RsgI_M"/>
</dbReference>
<dbReference type="Pfam" id="PF00942">
    <property type="entry name" value="CBM_3"/>
    <property type="match status" value="1"/>
</dbReference>
<dbReference type="Pfam" id="PF23750">
    <property type="entry name" value="RsgI_M"/>
    <property type="match status" value="1"/>
</dbReference>
<dbReference type="Pfam" id="PF12791">
    <property type="entry name" value="RsgI_N"/>
    <property type="match status" value="1"/>
</dbReference>
<dbReference type="SMART" id="SM01067">
    <property type="entry name" value="CBM_3"/>
    <property type="match status" value="1"/>
</dbReference>
<dbReference type="SUPFAM" id="SSF49384">
    <property type="entry name" value="Carbohydrate-binding domain"/>
    <property type="match status" value="1"/>
</dbReference>
<dbReference type="PROSITE" id="PS51172">
    <property type="entry name" value="CBM3"/>
    <property type="match status" value="1"/>
</dbReference>
<dbReference type="PROSITE" id="PS51849">
    <property type="entry name" value="RSGI_N"/>
    <property type="match status" value="1"/>
</dbReference>
<organism>
    <name type="scientific">Acetivibrio thermocellus (strain ATCC 27405 / DSM 1237 / JCM 9322 / NBRC 103400 / NCIMB 10682 / NRRL B-4536 / VPI 7372)</name>
    <name type="common">Clostridium thermocellum</name>
    <dbReference type="NCBI Taxonomy" id="203119"/>
    <lineage>
        <taxon>Bacteria</taxon>
        <taxon>Bacillati</taxon>
        <taxon>Bacillota</taxon>
        <taxon>Clostridia</taxon>
        <taxon>Eubacteriales</taxon>
        <taxon>Oscillospiraceae</taxon>
        <taxon>Acetivibrio</taxon>
    </lineage>
</organism>
<evidence type="ECO:0000250" key="1">
    <source>
        <dbReference type="UniProtKB" id="A3DBH1"/>
    </source>
</evidence>
<evidence type="ECO:0000255" key="2"/>
<evidence type="ECO:0000255" key="3">
    <source>
        <dbReference type="PROSITE-ProRule" id="PRU00513"/>
    </source>
</evidence>
<evidence type="ECO:0000255" key="4">
    <source>
        <dbReference type="PROSITE-ProRule" id="PRU01196"/>
    </source>
</evidence>
<evidence type="ECO:0000256" key="5">
    <source>
        <dbReference type="SAM" id="MobiDB-lite"/>
    </source>
</evidence>
<evidence type="ECO:0000269" key="6">
    <source>
    </source>
</evidence>
<evidence type="ECO:0000269" key="7">
    <source>
    </source>
</evidence>
<evidence type="ECO:0000303" key="8">
    <source>
    </source>
</evidence>
<evidence type="ECO:0000305" key="9"/>
<evidence type="ECO:0000312" key="10">
    <source>
        <dbReference type="EMBL" id="ABN51642.1"/>
    </source>
</evidence>
<evidence type="ECO:0007744" key="11">
    <source>
        <dbReference type="PDB" id="4B97"/>
    </source>
</evidence>